<reference key="1">
    <citation type="journal article" date="2000" name="Microb. Pathog.">
        <title>Identification of Pasteurella multocida virulence genes in a septicemic mouse model using signature-tagged mutagenesis.</title>
        <authorList>
            <person name="Fuller T.E."/>
            <person name="Kennedy M.J."/>
            <person name="Lowery D.E."/>
        </authorList>
    </citation>
    <scope>NUCLEOTIDE SEQUENCE [GENOMIC DNA]</scope>
</reference>
<reference key="2">
    <citation type="journal article" date="2001" name="Proc. Natl. Acad. Sci. U.S.A.">
        <title>Complete genomic sequence of Pasteurella multocida Pm70.</title>
        <authorList>
            <person name="May B.J."/>
            <person name="Zhang Q."/>
            <person name="Li L.L."/>
            <person name="Paustian M.L."/>
            <person name="Whittam T.S."/>
            <person name="Kapur V."/>
        </authorList>
    </citation>
    <scope>NUCLEOTIDE SEQUENCE [LARGE SCALE GENOMIC DNA]</scope>
    <source>
        <strain>Pm70</strain>
    </source>
</reference>
<feature type="chain" id="PRO_0000093703" description="Inosine-5'-monophosphate dehydrogenase">
    <location>
        <begin position="1"/>
        <end position="487"/>
    </location>
</feature>
<feature type="domain" description="CBS 1" evidence="1">
    <location>
        <begin position="93"/>
        <end position="149"/>
    </location>
</feature>
<feature type="domain" description="CBS 2" evidence="1">
    <location>
        <begin position="153"/>
        <end position="214"/>
    </location>
</feature>
<feature type="active site" description="Thioimidate intermediate" evidence="1">
    <location>
        <position position="305"/>
    </location>
</feature>
<feature type="active site" description="Proton acceptor" evidence="1">
    <location>
        <position position="401"/>
    </location>
</feature>
<feature type="binding site" evidence="1">
    <location>
        <begin position="248"/>
        <end position="250"/>
    </location>
    <ligand>
        <name>NAD(+)</name>
        <dbReference type="ChEBI" id="CHEBI:57540"/>
    </ligand>
</feature>
<feature type="binding site" evidence="1">
    <location>
        <position position="248"/>
    </location>
    <ligand>
        <name>NAD(+)</name>
        <dbReference type="ChEBI" id="CHEBI:57540"/>
    </ligand>
</feature>
<feature type="binding site" evidence="1">
    <location>
        <begin position="298"/>
        <end position="300"/>
    </location>
    <ligand>
        <name>NAD(+)</name>
        <dbReference type="ChEBI" id="CHEBI:57540"/>
    </ligand>
</feature>
<feature type="binding site" description="in other chain" evidence="1">
    <location>
        <position position="300"/>
    </location>
    <ligand>
        <name>K(+)</name>
        <dbReference type="ChEBI" id="CHEBI:29103"/>
        <note>ligand shared between two tetrameric partners</note>
    </ligand>
</feature>
<feature type="binding site" description="in other chain" evidence="1">
    <location>
        <position position="302"/>
    </location>
    <ligand>
        <name>K(+)</name>
        <dbReference type="ChEBI" id="CHEBI:29103"/>
        <note>ligand shared between two tetrameric partners</note>
    </ligand>
</feature>
<feature type="binding site" evidence="1">
    <location>
        <position position="303"/>
    </location>
    <ligand>
        <name>IMP</name>
        <dbReference type="ChEBI" id="CHEBI:58053"/>
    </ligand>
</feature>
<feature type="binding site" description="in other chain" evidence="1">
    <location>
        <position position="305"/>
    </location>
    <ligand>
        <name>K(+)</name>
        <dbReference type="ChEBI" id="CHEBI:29103"/>
        <note>ligand shared between two tetrameric partners</note>
    </ligand>
</feature>
<feature type="binding site" evidence="1">
    <location>
        <begin position="338"/>
        <end position="340"/>
    </location>
    <ligand>
        <name>IMP</name>
        <dbReference type="ChEBI" id="CHEBI:58053"/>
    </ligand>
</feature>
<feature type="binding site" evidence="1">
    <location>
        <begin position="361"/>
        <end position="362"/>
    </location>
    <ligand>
        <name>IMP</name>
        <dbReference type="ChEBI" id="CHEBI:58053"/>
    </ligand>
</feature>
<feature type="binding site" evidence="1">
    <location>
        <begin position="385"/>
        <end position="389"/>
    </location>
    <ligand>
        <name>IMP</name>
        <dbReference type="ChEBI" id="CHEBI:58053"/>
    </ligand>
</feature>
<feature type="binding site" evidence="1">
    <location>
        <position position="415"/>
    </location>
    <ligand>
        <name>IMP</name>
        <dbReference type="ChEBI" id="CHEBI:58053"/>
    </ligand>
</feature>
<feature type="binding site" evidence="1">
    <location>
        <position position="469"/>
    </location>
    <ligand>
        <name>K(+)</name>
        <dbReference type="ChEBI" id="CHEBI:29103"/>
        <note>ligand shared between two tetrameric partners</note>
    </ligand>
</feature>
<feature type="binding site" evidence="1">
    <location>
        <position position="470"/>
    </location>
    <ligand>
        <name>K(+)</name>
        <dbReference type="ChEBI" id="CHEBI:29103"/>
        <note>ligand shared between two tetrameric partners</note>
    </ligand>
</feature>
<feature type="binding site" evidence="1">
    <location>
        <position position="471"/>
    </location>
    <ligand>
        <name>K(+)</name>
        <dbReference type="ChEBI" id="CHEBI:29103"/>
        <note>ligand shared between two tetrameric partners</note>
    </ligand>
</feature>
<organism>
    <name type="scientific">Pasteurella multocida (strain Pm70)</name>
    <dbReference type="NCBI Taxonomy" id="272843"/>
    <lineage>
        <taxon>Bacteria</taxon>
        <taxon>Pseudomonadati</taxon>
        <taxon>Pseudomonadota</taxon>
        <taxon>Gammaproteobacteria</taxon>
        <taxon>Pasteurellales</taxon>
        <taxon>Pasteurellaceae</taxon>
        <taxon>Pasteurella</taxon>
    </lineage>
</organism>
<gene>
    <name evidence="1" type="primary">guaB</name>
    <name type="ordered locus">PM0295</name>
</gene>
<protein>
    <recommendedName>
        <fullName evidence="1">Inosine-5'-monophosphate dehydrogenase</fullName>
        <shortName evidence="1">IMP dehydrogenase</shortName>
        <shortName evidence="1">IMPD</shortName>
        <shortName evidence="1">IMPDH</shortName>
        <ecNumber evidence="1">1.1.1.205</ecNumber>
    </recommendedName>
</protein>
<evidence type="ECO:0000255" key="1">
    <source>
        <dbReference type="HAMAP-Rule" id="MF_01964"/>
    </source>
</evidence>
<comment type="function">
    <text evidence="1">Catalyzes the conversion of inosine 5'-phosphate (IMP) to xanthosine 5'-phosphate (XMP), the first committed and rate-limiting step in the de novo synthesis of guanine nucleotides, and therefore plays an important role in the regulation of cell growth.</text>
</comment>
<comment type="catalytic activity">
    <reaction evidence="1">
        <text>IMP + NAD(+) + H2O = XMP + NADH + H(+)</text>
        <dbReference type="Rhea" id="RHEA:11708"/>
        <dbReference type="ChEBI" id="CHEBI:15377"/>
        <dbReference type="ChEBI" id="CHEBI:15378"/>
        <dbReference type="ChEBI" id="CHEBI:57464"/>
        <dbReference type="ChEBI" id="CHEBI:57540"/>
        <dbReference type="ChEBI" id="CHEBI:57945"/>
        <dbReference type="ChEBI" id="CHEBI:58053"/>
        <dbReference type="EC" id="1.1.1.205"/>
    </reaction>
</comment>
<comment type="cofactor">
    <cofactor evidence="1">
        <name>K(+)</name>
        <dbReference type="ChEBI" id="CHEBI:29103"/>
    </cofactor>
</comment>
<comment type="activity regulation">
    <text evidence="1">Mycophenolic acid (MPA) is a non-competitive inhibitor that prevents formation of the closed enzyme conformation by binding to the same site as the amobile flap. In contrast, mizoribine monophosphate (MZP) is a competitive inhibitor that induces the closed conformation. MPA is a potent inhibitor of mammalian IMPDHs but a poor inhibitor of the bacterial enzymes. MZP is a more potent inhibitor of bacterial IMPDH.</text>
</comment>
<comment type="pathway">
    <text evidence="1">Purine metabolism; XMP biosynthesis via de novo pathway; XMP from IMP: step 1/1.</text>
</comment>
<comment type="subunit">
    <text evidence="1">Homotetramer.</text>
</comment>
<comment type="similarity">
    <text evidence="1">Belongs to the IMPDH/GMPR family.</text>
</comment>
<keyword id="KW-0129">CBS domain</keyword>
<keyword id="KW-0332">GMP biosynthesis</keyword>
<keyword id="KW-0479">Metal-binding</keyword>
<keyword id="KW-0520">NAD</keyword>
<keyword id="KW-0560">Oxidoreductase</keyword>
<keyword id="KW-0630">Potassium</keyword>
<keyword id="KW-0658">Purine biosynthesis</keyword>
<keyword id="KW-1185">Reference proteome</keyword>
<keyword id="KW-0677">Repeat</keyword>
<name>IMDH_PASMU</name>
<accession>Q9L6B7</accession>
<sequence length="487" mass="52008">MLRVIKEALTFDDVLLVPAHSTVLPNTADLSTQLTKTIRLNIPMLSAAMDTVTETKLAISLAQEGGIGFIHKNMSIERQAERVRKVKKFESGIVSDPVTVSPTLSLAELSELVKKNGFASFPVVDDEKNLVGIITGRDTRFVTDLNKTVADFMTPKARLVTVKRNASRDEIFGLMHTHRVEKVLVVSDDFKLKGMITLKDYQKSEQKPQACKDEFGRLRVGAAVGAGPGNEERIDALVKAGVDVLLIDSSHGHSEGVLQRVRETRAKYPDLPIVAGNVATAEGAIALADAGASAVKVGIGPGSICTTRIVTGVGVPQITAIADAAEALKDRGIPVIADGGIRFSGDISKAIAAGASCVMVGSMFAGTEEAPGEIELYQGRAFKSYRGMGSLGAMSKGSSDRYFQSDNAADKLVPEGIEGRIPYKGFLKEIIHQQMGGLRSCMGLTGCATIDELRTKAQFVRISGAGIQESHVHDVTITKEAPNYRMG</sequence>
<proteinExistence type="inferred from homology"/>
<dbReference type="EC" id="1.1.1.205" evidence="1"/>
<dbReference type="EMBL" id="AF237921">
    <property type="protein sequence ID" value="AAF68407.1"/>
    <property type="molecule type" value="Genomic_DNA"/>
</dbReference>
<dbReference type="EMBL" id="AE004439">
    <property type="protein sequence ID" value="AAK02379.1"/>
    <property type="molecule type" value="Genomic_DNA"/>
</dbReference>
<dbReference type="RefSeq" id="WP_005725353.1">
    <property type="nucleotide sequence ID" value="NC_002663.1"/>
</dbReference>
<dbReference type="SMR" id="Q9L6B7"/>
<dbReference type="STRING" id="272843.PM0295"/>
<dbReference type="EnsemblBacteria" id="AAK02379">
    <property type="protein sequence ID" value="AAK02379"/>
    <property type="gene ID" value="PM0295"/>
</dbReference>
<dbReference type="GeneID" id="77207647"/>
<dbReference type="KEGG" id="pmu:PM0295"/>
<dbReference type="HOGENOM" id="CLU_022552_2_2_6"/>
<dbReference type="OrthoDB" id="9805398at2"/>
<dbReference type="UniPathway" id="UPA00601">
    <property type="reaction ID" value="UER00295"/>
</dbReference>
<dbReference type="Proteomes" id="UP000000809">
    <property type="component" value="Chromosome"/>
</dbReference>
<dbReference type="GO" id="GO:0003938">
    <property type="term" value="F:IMP dehydrogenase activity"/>
    <property type="evidence" value="ECO:0007669"/>
    <property type="project" value="UniProtKB-UniRule"/>
</dbReference>
<dbReference type="GO" id="GO:0046872">
    <property type="term" value="F:metal ion binding"/>
    <property type="evidence" value="ECO:0007669"/>
    <property type="project" value="UniProtKB-UniRule"/>
</dbReference>
<dbReference type="GO" id="GO:0000166">
    <property type="term" value="F:nucleotide binding"/>
    <property type="evidence" value="ECO:0007669"/>
    <property type="project" value="UniProtKB-UniRule"/>
</dbReference>
<dbReference type="GO" id="GO:0006177">
    <property type="term" value="P:GMP biosynthetic process"/>
    <property type="evidence" value="ECO:0007669"/>
    <property type="project" value="UniProtKB-UniRule"/>
</dbReference>
<dbReference type="GO" id="GO:0006183">
    <property type="term" value="P:GTP biosynthetic process"/>
    <property type="evidence" value="ECO:0007669"/>
    <property type="project" value="TreeGrafter"/>
</dbReference>
<dbReference type="CDD" id="cd04601">
    <property type="entry name" value="CBS_pair_IMPDH"/>
    <property type="match status" value="1"/>
</dbReference>
<dbReference type="CDD" id="cd00381">
    <property type="entry name" value="IMPDH"/>
    <property type="match status" value="1"/>
</dbReference>
<dbReference type="FunFam" id="3.20.20.70:FF:000003">
    <property type="entry name" value="GMP reductase"/>
    <property type="match status" value="1"/>
</dbReference>
<dbReference type="Gene3D" id="3.20.20.70">
    <property type="entry name" value="Aldolase class I"/>
    <property type="match status" value="1"/>
</dbReference>
<dbReference type="HAMAP" id="MF_01964">
    <property type="entry name" value="IMPDH"/>
    <property type="match status" value="1"/>
</dbReference>
<dbReference type="InterPro" id="IPR013785">
    <property type="entry name" value="Aldolase_TIM"/>
</dbReference>
<dbReference type="InterPro" id="IPR000644">
    <property type="entry name" value="CBS_dom"/>
</dbReference>
<dbReference type="InterPro" id="IPR046342">
    <property type="entry name" value="CBS_dom_sf"/>
</dbReference>
<dbReference type="InterPro" id="IPR005990">
    <property type="entry name" value="IMP_DH"/>
</dbReference>
<dbReference type="InterPro" id="IPR015875">
    <property type="entry name" value="IMP_DH/GMP_Rdtase_CS"/>
</dbReference>
<dbReference type="InterPro" id="IPR001093">
    <property type="entry name" value="IMP_DH_GMPRt"/>
</dbReference>
<dbReference type="NCBIfam" id="TIGR01302">
    <property type="entry name" value="IMP_dehydrog"/>
    <property type="match status" value="1"/>
</dbReference>
<dbReference type="PANTHER" id="PTHR11911:SF111">
    <property type="entry name" value="INOSINE-5'-MONOPHOSPHATE DEHYDROGENASE"/>
    <property type="match status" value="1"/>
</dbReference>
<dbReference type="PANTHER" id="PTHR11911">
    <property type="entry name" value="INOSINE-5-MONOPHOSPHATE DEHYDROGENASE RELATED"/>
    <property type="match status" value="1"/>
</dbReference>
<dbReference type="Pfam" id="PF00571">
    <property type="entry name" value="CBS"/>
    <property type="match status" value="2"/>
</dbReference>
<dbReference type="Pfam" id="PF00478">
    <property type="entry name" value="IMPDH"/>
    <property type="match status" value="1"/>
</dbReference>
<dbReference type="PIRSF" id="PIRSF000130">
    <property type="entry name" value="IMPDH"/>
    <property type="match status" value="1"/>
</dbReference>
<dbReference type="SMART" id="SM00116">
    <property type="entry name" value="CBS"/>
    <property type="match status" value="2"/>
</dbReference>
<dbReference type="SMART" id="SM01240">
    <property type="entry name" value="IMPDH"/>
    <property type="match status" value="1"/>
</dbReference>
<dbReference type="SUPFAM" id="SSF54631">
    <property type="entry name" value="CBS-domain pair"/>
    <property type="match status" value="1"/>
</dbReference>
<dbReference type="SUPFAM" id="SSF51412">
    <property type="entry name" value="Inosine monophosphate dehydrogenase (IMPDH)"/>
    <property type="match status" value="1"/>
</dbReference>
<dbReference type="PROSITE" id="PS51371">
    <property type="entry name" value="CBS"/>
    <property type="match status" value="2"/>
</dbReference>
<dbReference type="PROSITE" id="PS00487">
    <property type="entry name" value="IMP_DH_GMP_RED"/>
    <property type="match status" value="1"/>
</dbReference>